<gene>
    <name type="ordered locus">BLi00890</name>
    <name type="ordered locus">BL03042</name>
</gene>
<feature type="chain" id="PRO_0000248090" description="Nucleoside triphosphate/diphosphate phosphatase">
    <location>
        <begin position="1"/>
        <end position="176"/>
    </location>
</feature>
<feature type="active site" description="Proton donor" evidence="1">
    <location>
        <position position="23"/>
    </location>
</feature>
<feature type="binding site" evidence="1">
    <location>
        <position position="87"/>
    </location>
    <ligand>
        <name>Mg(2+)</name>
        <dbReference type="ChEBI" id="CHEBI:18420"/>
        <label>1</label>
    </ligand>
</feature>
<feature type="binding site" evidence="1">
    <location>
        <position position="103"/>
    </location>
    <ligand>
        <name>Mg(2+)</name>
        <dbReference type="ChEBI" id="CHEBI:18420"/>
        <label>1</label>
    </ligand>
</feature>
<feature type="binding site" evidence="1">
    <location>
        <position position="105"/>
    </location>
    <ligand>
        <name>Mg(2+)</name>
        <dbReference type="ChEBI" id="CHEBI:18420"/>
        <label>2</label>
    </ligand>
</feature>
<feature type="binding site" evidence="1">
    <location>
        <position position="107"/>
    </location>
    <ligand>
        <name>Mg(2+)</name>
        <dbReference type="ChEBI" id="CHEBI:18420"/>
        <label>1</label>
    </ligand>
</feature>
<feature type="binding site" evidence="1">
    <location>
        <position position="107"/>
    </location>
    <ligand>
        <name>Mg(2+)</name>
        <dbReference type="ChEBI" id="CHEBI:18420"/>
        <label>2</label>
    </ligand>
</feature>
<feature type="binding site" evidence="1">
    <location>
        <position position="120"/>
    </location>
    <ligand>
        <name>Mg(2+)</name>
        <dbReference type="ChEBI" id="CHEBI:18420"/>
        <label>2</label>
    </ligand>
</feature>
<feature type="binding site" evidence="1">
    <location>
        <position position="123"/>
    </location>
    <ligand>
        <name>Mg(2+)</name>
        <dbReference type="ChEBI" id="CHEBI:18420"/>
        <label>2</label>
    </ligand>
</feature>
<reference key="1">
    <citation type="journal article" date="2004" name="J. Mol. Microbiol. Biotechnol.">
        <title>The complete genome sequence of Bacillus licheniformis DSM13, an organism with great industrial potential.</title>
        <authorList>
            <person name="Veith B."/>
            <person name="Herzberg C."/>
            <person name="Steckel S."/>
            <person name="Feesche J."/>
            <person name="Maurer K.H."/>
            <person name="Ehrenreich P."/>
            <person name="Baeumer S."/>
            <person name="Henne A."/>
            <person name="Liesegang H."/>
            <person name="Merkl R."/>
            <person name="Ehrenreich A."/>
            <person name="Gottschalk G."/>
        </authorList>
    </citation>
    <scope>NUCLEOTIDE SEQUENCE [LARGE SCALE GENOMIC DNA]</scope>
    <source>
        <strain>ATCC 14580 / DSM 13 / JCM 2505 / CCUG 7422 / NBRC 12200 / NCIMB 9375 / NCTC 10341 / NRRL NRS-1264 / Gibson 46</strain>
    </source>
</reference>
<reference key="2">
    <citation type="journal article" date="2004" name="Genome Biol.">
        <title>Complete genome sequence of the industrial bacterium Bacillus licheniformis and comparisons with closely related Bacillus species.</title>
        <authorList>
            <person name="Rey M.W."/>
            <person name="Ramaiya P."/>
            <person name="Nelson B.A."/>
            <person name="Brody-Karpin S.D."/>
            <person name="Zaretsky E.J."/>
            <person name="Tang M."/>
            <person name="Lopez de Leon A."/>
            <person name="Xiang H."/>
            <person name="Gusti V."/>
            <person name="Clausen I.G."/>
            <person name="Olsen P.B."/>
            <person name="Rasmussen M.D."/>
            <person name="Andersen J.T."/>
            <person name="Joergensen P.L."/>
            <person name="Larsen T.S."/>
            <person name="Sorokin A."/>
            <person name="Bolotin A."/>
            <person name="Lapidus A."/>
            <person name="Galleron N."/>
            <person name="Ehrlich S.D."/>
            <person name="Berka R.M."/>
        </authorList>
    </citation>
    <scope>NUCLEOTIDE SEQUENCE [LARGE SCALE GENOMIC DNA]</scope>
    <source>
        <strain>ATCC 14580 / DSM 13 / JCM 2505 / CCUG 7422 / NBRC 12200 / NCIMB 9375 / NCTC 10341 / NRRL NRS-1264 / Gibson 46</strain>
    </source>
</reference>
<comment type="function">
    <text evidence="1">Has nucleoside phosphatase activity towards nucleoside triphosphates and nucleoside diphosphates.</text>
</comment>
<comment type="catalytic activity">
    <reaction evidence="1">
        <text>a ribonucleoside 5'-triphosphate + H2O = a ribonucleoside 5'-diphosphate + phosphate + H(+)</text>
        <dbReference type="Rhea" id="RHEA:23680"/>
        <dbReference type="ChEBI" id="CHEBI:15377"/>
        <dbReference type="ChEBI" id="CHEBI:15378"/>
        <dbReference type="ChEBI" id="CHEBI:43474"/>
        <dbReference type="ChEBI" id="CHEBI:57930"/>
        <dbReference type="ChEBI" id="CHEBI:61557"/>
        <dbReference type="EC" id="3.6.1.15"/>
    </reaction>
</comment>
<comment type="catalytic activity">
    <reaction evidence="1">
        <text>a ribonucleoside 5'-diphosphate + H2O = a ribonucleoside 5'-phosphate + phosphate + H(+)</text>
        <dbReference type="Rhea" id="RHEA:36799"/>
        <dbReference type="ChEBI" id="CHEBI:15377"/>
        <dbReference type="ChEBI" id="CHEBI:15378"/>
        <dbReference type="ChEBI" id="CHEBI:43474"/>
        <dbReference type="ChEBI" id="CHEBI:57930"/>
        <dbReference type="ChEBI" id="CHEBI:58043"/>
        <dbReference type="EC" id="3.6.1.6"/>
    </reaction>
</comment>
<comment type="cofactor">
    <cofactor evidence="1">
        <name>Mg(2+)</name>
        <dbReference type="ChEBI" id="CHEBI:18420"/>
    </cofactor>
</comment>
<comment type="similarity">
    <text evidence="1">Belongs to the Ntdp family.</text>
</comment>
<organism>
    <name type="scientific">Bacillus licheniformis (strain ATCC 14580 / DSM 13 / JCM 2505 / CCUG 7422 / NBRC 12200 / NCIMB 9375 / NCTC 10341 / NRRL NRS-1264 / Gibson 46)</name>
    <dbReference type="NCBI Taxonomy" id="279010"/>
    <lineage>
        <taxon>Bacteria</taxon>
        <taxon>Bacillati</taxon>
        <taxon>Bacillota</taxon>
        <taxon>Bacilli</taxon>
        <taxon>Bacillales</taxon>
        <taxon>Bacillaceae</taxon>
        <taxon>Bacillus</taxon>
    </lineage>
</organism>
<keyword id="KW-0378">Hydrolase</keyword>
<keyword id="KW-0460">Magnesium</keyword>
<keyword id="KW-0479">Metal-binding</keyword>
<keyword id="KW-1185">Reference proteome</keyword>
<name>NTDP_BACLD</name>
<protein>
    <recommendedName>
        <fullName evidence="1">Nucleoside triphosphate/diphosphate phosphatase</fullName>
        <ecNumber evidence="1">3.6.1.15</ecNumber>
        <ecNumber evidence="1">3.6.1.6</ecNumber>
    </recommendedName>
</protein>
<dbReference type="EC" id="3.6.1.15" evidence="1"/>
<dbReference type="EC" id="3.6.1.6" evidence="1"/>
<dbReference type="EMBL" id="AE017333">
    <property type="protein sequence ID" value="AAU39824.1"/>
    <property type="molecule type" value="Genomic_DNA"/>
</dbReference>
<dbReference type="EMBL" id="CP000002">
    <property type="protein sequence ID" value="AAU22476.1"/>
    <property type="molecule type" value="Genomic_DNA"/>
</dbReference>
<dbReference type="RefSeq" id="WP_003179942.1">
    <property type="nucleotide sequence ID" value="NC_006322.1"/>
</dbReference>
<dbReference type="SMR" id="Q65M90"/>
<dbReference type="STRING" id="279010.BL03042"/>
<dbReference type="KEGG" id="bld:BLi00890"/>
<dbReference type="KEGG" id="bli:BL03042"/>
<dbReference type="eggNOG" id="COG3557">
    <property type="taxonomic scope" value="Bacteria"/>
</dbReference>
<dbReference type="HOGENOM" id="CLU_109787_1_0_9"/>
<dbReference type="Proteomes" id="UP000000606">
    <property type="component" value="Chromosome"/>
</dbReference>
<dbReference type="GO" id="GO:0000287">
    <property type="term" value="F:magnesium ion binding"/>
    <property type="evidence" value="ECO:0007669"/>
    <property type="project" value="UniProtKB-UniRule"/>
</dbReference>
<dbReference type="GO" id="GO:0017110">
    <property type="term" value="F:nucleoside diphosphate phosphatase activity"/>
    <property type="evidence" value="ECO:0007669"/>
    <property type="project" value="UniProtKB-UniRule"/>
</dbReference>
<dbReference type="GO" id="GO:0017111">
    <property type="term" value="F:ribonucleoside triphosphate phosphatase activity"/>
    <property type="evidence" value="ECO:0007669"/>
    <property type="project" value="UniProtKB-UniRule"/>
</dbReference>
<dbReference type="Gene3D" id="2.40.380.10">
    <property type="entry name" value="FomD-like"/>
    <property type="match status" value="1"/>
</dbReference>
<dbReference type="HAMAP" id="MF_01568">
    <property type="entry name" value="Ntdp"/>
    <property type="match status" value="1"/>
</dbReference>
<dbReference type="InterPro" id="IPR007295">
    <property type="entry name" value="DUF402"/>
</dbReference>
<dbReference type="InterPro" id="IPR035930">
    <property type="entry name" value="FomD-like_sf"/>
</dbReference>
<dbReference type="InterPro" id="IPR050212">
    <property type="entry name" value="Ntdp-like"/>
</dbReference>
<dbReference type="InterPro" id="IPR016882">
    <property type="entry name" value="SA1684"/>
</dbReference>
<dbReference type="NCBIfam" id="NF010183">
    <property type="entry name" value="PRK13662.1"/>
    <property type="match status" value="1"/>
</dbReference>
<dbReference type="PANTHER" id="PTHR39159">
    <property type="match status" value="1"/>
</dbReference>
<dbReference type="PANTHER" id="PTHR39159:SF1">
    <property type="entry name" value="UPF0374 PROTEIN YGAC"/>
    <property type="match status" value="1"/>
</dbReference>
<dbReference type="Pfam" id="PF04167">
    <property type="entry name" value="DUF402"/>
    <property type="match status" value="1"/>
</dbReference>
<dbReference type="PIRSF" id="PIRSF028345">
    <property type="entry name" value="UCP028345"/>
    <property type="match status" value="1"/>
</dbReference>
<dbReference type="SUPFAM" id="SSF159234">
    <property type="entry name" value="FomD-like"/>
    <property type="match status" value="1"/>
</dbReference>
<proteinExistence type="inferred from homology"/>
<accession>Q65M90</accession>
<accession>Q62XN2</accession>
<evidence type="ECO:0000255" key="1">
    <source>
        <dbReference type="HAMAP-Rule" id="MF_01568"/>
    </source>
</evidence>
<sequence length="176" mass="21035">MGFPKEGETIQIHSYKHNGQIHRIWNETTILKATELCIIGANDRTMVTESDGRTWVTREPAICYFHAKQWFNVIGMLREDGIYYYCNISSPFALDDEAIKYIDYDLDVKVFPDMTYHILDEDEYADHKKAMNYPKEIDGILRYHLNTLLHWIHQRKGPFASEFIDIWYERYLHYTK</sequence>